<keyword id="KW-0007">Acetylation</keyword>
<keyword id="KW-0067">ATP-binding</keyword>
<keyword id="KW-0378">Hydrolase</keyword>
<keyword id="KW-0418">Kinase</keyword>
<keyword id="KW-0511">Multifunctional enzyme</keyword>
<keyword id="KW-0547">Nucleotide-binding</keyword>
<keyword id="KW-0597">Phosphoprotein</keyword>
<keyword id="KW-1185">Reference proteome</keyword>
<keyword id="KW-0808">Transferase</keyword>
<comment type="function">
    <text evidence="2">Synthesis and degradation of fructose 2,6-bisphosphate.</text>
</comment>
<comment type="catalytic activity">
    <reaction evidence="2">
        <text>beta-D-fructose 2,6-bisphosphate + H2O = beta-D-fructose 6-phosphate + phosphate</text>
        <dbReference type="Rhea" id="RHEA:17289"/>
        <dbReference type="ChEBI" id="CHEBI:15377"/>
        <dbReference type="ChEBI" id="CHEBI:43474"/>
        <dbReference type="ChEBI" id="CHEBI:57634"/>
        <dbReference type="ChEBI" id="CHEBI:58579"/>
        <dbReference type="EC" id="3.1.3.46"/>
    </reaction>
</comment>
<comment type="catalytic activity">
    <reaction evidence="2">
        <text>beta-D-fructose 6-phosphate + ATP = beta-D-fructose 2,6-bisphosphate + ADP + H(+)</text>
        <dbReference type="Rhea" id="RHEA:15653"/>
        <dbReference type="ChEBI" id="CHEBI:15378"/>
        <dbReference type="ChEBI" id="CHEBI:30616"/>
        <dbReference type="ChEBI" id="CHEBI:57634"/>
        <dbReference type="ChEBI" id="CHEBI:58579"/>
        <dbReference type="ChEBI" id="CHEBI:456216"/>
        <dbReference type="EC" id="2.7.1.105"/>
    </reaction>
</comment>
<comment type="activity regulation">
    <text evidence="2">Phosphorylation results in the activation of the kinase activity.</text>
</comment>
<comment type="subunit">
    <text evidence="2 5">Homodimer (By similarity). Forms a heterodimer with PFKFB3 (By similarity).</text>
</comment>
<comment type="PTM">
    <text evidence="2">Phosphorylation by AMPK stimulates activity.</text>
</comment>
<comment type="similarity">
    <text evidence="8">In the C-terminal section; belongs to the phosphoglycerate mutase family.</text>
</comment>
<dbReference type="EC" id="2.7.1.105" evidence="2"/>
<dbReference type="EC" id="3.1.3.46" evidence="2"/>
<dbReference type="EMBL" id="CR925919">
    <property type="protein sequence ID" value="CAI29582.1"/>
    <property type="molecule type" value="mRNA"/>
</dbReference>
<dbReference type="RefSeq" id="NP_001127057.1">
    <property type="nucleotide sequence ID" value="NM_001133585.1"/>
</dbReference>
<dbReference type="SMR" id="Q5NVT1"/>
<dbReference type="STRING" id="9601.ENSPPYP00000000288"/>
<dbReference type="GeneID" id="100174086"/>
<dbReference type="KEGG" id="pon:100174086"/>
<dbReference type="CTD" id="5208"/>
<dbReference type="eggNOG" id="KOG0234">
    <property type="taxonomic scope" value="Eukaryota"/>
</dbReference>
<dbReference type="InParanoid" id="Q5NVT1"/>
<dbReference type="OrthoDB" id="267323at2759"/>
<dbReference type="Proteomes" id="UP000001595">
    <property type="component" value="Unplaced"/>
</dbReference>
<dbReference type="GO" id="GO:0005829">
    <property type="term" value="C:cytosol"/>
    <property type="evidence" value="ECO:0007669"/>
    <property type="project" value="TreeGrafter"/>
</dbReference>
<dbReference type="GO" id="GO:0003873">
    <property type="term" value="F:6-phosphofructo-2-kinase activity"/>
    <property type="evidence" value="ECO:0000250"/>
    <property type="project" value="UniProtKB"/>
</dbReference>
<dbReference type="GO" id="GO:0005524">
    <property type="term" value="F:ATP binding"/>
    <property type="evidence" value="ECO:0007669"/>
    <property type="project" value="UniProtKB-KW"/>
</dbReference>
<dbReference type="GO" id="GO:0004331">
    <property type="term" value="F:fructose-2,6-bisphosphate 2-phosphatase activity"/>
    <property type="evidence" value="ECO:0007669"/>
    <property type="project" value="UniProtKB-EC"/>
</dbReference>
<dbReference type="GO" id="GO:0006003">
    <property type="term" value="P:fructose 2,6-bisphosphate metabolic process"/>
    <property type="evidence" value="ECO:0007669"/>
    <property type="project" value="InterPro"/>
</dbReference>
<dbReference type="GO" id="GO:0006000">
    <property type="term" value="P:fructose metabolic process"/>
    <property type="evidence" value="ECO:0007669"/>
    <property type="project" value="InterPro"/>
</dbReference>
<dbReference type="GO" id="GO:0006096">
    <property type="term" value="P:glycolytic process"/>
    <property type="evidence" value="ECO:0000250"/>
    <property type="project" value="UniProtKB"/>
</dbReference>
<dbReference type="CDD" id="cd07067">
    <property type="entry name" value="HP_PGM_like"/>
    <property type="match status" value="1"/>
</dbReference>
<dbReference type="FunFam" id="3.40.50.1240:FF:000001">
    <property type="entry name" value="6-phosphofructo-2-kinase/fructose-2, 6-bisphosphatase 3 isoform 2"/>
    <property type="match status" value="1"/>
</dbReference>
<dbReference type="FunFam" id="3.40.50.300:FF:000047">
    <property type="entry name" value="6-phosphofructo-2-kinase/fructose-2, 6-bisphosphatase 3 isoform 2"/>
    <property type="match status" value="1"/>
</dbReference>
<dbReference type="Gene3D" id="3.40.50.300">
    <property type="entry name" value="P-loop containing nucleotide triphosphate hydrolases"/>
    <property type="match status" value="1"/>
</dbReference>
<dbReference type="Gene3D" id="3.40.50.1240">
    <property type="entry name" value="Phosphoglycerate mutase-like"/>
    <property type="match status" value="1"/>
</dbReference>
<dbReference type="InterPro" id="IPR003094">
    <property type="entry name" value="6Pfruct_kin"/>
</dbReference>
<dbReference type="InterPro" id="IPR013079">
    <property type="entry name" value="6Phosfructo_kin"/>
</dbReference>
<dbReference type="InterPro" id="IPR013078">
    <property type="entry name" value="His_Pase_superF_clade-1"/>
</dbReference>
<dbReference type="InterPro" id="IPR029033">
    <property type="entry name" value="His_PPase_superfam"/>
</dbReference>
<dbReference type="InterPro" id="IPR027417">
    <property type="entry name" value="P-loop_NTPase"/>
</dbReference>
<dbReference type="PANTHER" id="PTHR10606">
    <property type="entry name" value="6-PHOSPHOFRUCTO-2-KINASE/FRUCTOSE-2,6-BISPHOSPHATASE"/>
    <property type="match status" value="1"/>
</dbReference>
<dbReference type="PANTHER" id="PTHR10606:SF48">
    <property type="entry name" value="6-PHOSPHOFRUCTO-2-KINASE_FRUCTOSE-2,6-BISPHOSPHATASE 2"/>
    <property type="match status" value="1"/>
</dbReference>
<dbReference type="Pfam" id="PF01591">
    <property type="entry name" value="6PF2K"/>
    <property type="match status" value="1"/>
</dbReference>
<dbReference type="Pfam" id="PF00300">
    <property type="entry name" value="His_Phos_1"/>
    <property type="match status" value="1"/>
</dbReference>
<dbReference type="PIRSF" id="PIRSF000709">
    <property type="entry name" value="6PFK_2-Ptase"/>
    <property type="match status" value="1"/>
</dbReference>
<dbReference type="PRINTS" id="PR00991">
    <property type="entry name" value="6PFRUCTKNASE"/>
</dbReference>
<dbReference type="SMART" id="SM00855">
    <property type="entry name" value="PGAM"/>
    <property type="match status" value="1"/>
</dbReference>
<dbReference type="SUPFAM" id="SSF52540">
    <property type="entry name" value="P-loop containing nucleoside triphosphate hydrolases"/>
    <property type="match status" value="1"/>
</dbReference>
<dbReference type="SUPFAM" id="SSF53254">
    <property type="entry name" value="Phosphoglycerate mutase-like"/>
    <property type="match status" value="1"/>
</dbReference>
<proteinExistence type="evidence at transcript level"/>
<organism>
    <name type="scientific">Pongo abelii</name>
    <name type="common">Sumatran orangutan</name>
    <name type="synonym">Pongo pygmaeus abelii</name>
    <dbReference type="NCBI Taxonomy" id="9601"/>
    <lineage>
        <taxon>Eukaryota</taxon>
        <taxon>Metazoa</taxon>
        <taxon>Chordata</taxon>
        <taxon>Craniata</taxon>
        <taxon>Vertebrata</taxon>
        <taxon>Euteleostomi</taxon>
        <taxon>Mammalia</taxon>
        <taxon>Eutheria</taxon>
        <taxon>Euarchontoglires</taxon>
        <taxon>Primates</taxon>
        <taxon>Haplorrhini</taxon>
        <taxon>Catarrhini</taxon>
        <taxon>Hominidae</taxon>
        <taxon>Pongo</taxon>
    </lineage>
</organism>
<feature type="initiator methionine" description="Removed" evidence="2">
    <location>
        <position position="1"/>
    </location>
</feature>
<feature type="chain" id="PRO_0000345129" description="6-phosphofructo-2-kinase/fructose-2,6-bisphosphatase 2">
    <location>
        <begin position="2"/>
        <end position="530"/>
    </location>
</feature>
<feature type="region of interest" description="Disordered" evidence="7">
    <location>
        <begin position="1"/>
        <end position="21"/>
    </location>
</feature>
<feature type="region of interest" description="6-phosphofructo-2-kinase">
    <location>
        <begin position="2"/>
        <end position="248"/>
    </location>
</feature>
<feature type="region of interest" description="Fructose-2,6-bisphosphatase">
    <location>
        <begin position="249"/>
        <end position="530"/>
    </location>
</feature>
<feature type="region of interest" description="Disordered" evidence="7">
    <location>
        <begin position="446"/>
        <end position="512"/>
    </location>
</feature>
<feature type="compositionally biased region" description="Polar residues" evidence="7">
    <location>
        <begin position="1"/>
        <end position="15"/>
    </location>
</feature>
<feature type="compositionally biased region" description="Polar residues" evidence="7">
    <location>
        <begin position="450"/>
        <end position="476"/>
    </location>
</feature>
<feature type="active site" evidence="6">
    <location>
        <position position="128"/>
    </location>
</feature>
<feature type="active site" evidence="6">
    <location>
        <position position="158"/>
    </location>
</feature>
<feature type="active site" description="Tele-phosphohistidine intermediate" evidence="5">
    <location>
        <position position="257"/>
    </location>
</feature>
<feature type="active site" description="Proton donor/acceptor" evidence="5">
    <location>
        <position position="326"/>
    </location>
</feature>
<feature type="binding site" evidence="5">
    <location>
        <begin position="45"/>
        <end position="53"/>
    </location>
    <ligand>
        <name>ATP</name>
        <dbReference type="ChEBI" id="CHEBI:30616"/>
    </ligand>
</feature>
<feature type="binding site" evidence="5">
    <location>
        <position position="78"/>
    </location>
    <ligand>
        <name>beta-D-fructose 6-phosphate</name>
        <dbReference type="ChEBI" id="CHEBI:57634"/>
    </ligand>
</feature>
<feature type="binding site" evidence="5">
    <location>
        <position position="102"/>
    </location>
    <ligand>
        <name>beta-D-fructose 6-phosphate</name>
        <dbReference type="ChEBI" id="CHEBI:57634"/>
    </ligand>
</feature>
<feature type="binding site" evidence="5">
    <location>
        <position position="130"/>
    </location>
    <ligand>
        <name>beta-D-fructose 6-phosphate</name>
        <dbReference type="ChEBI" id="CHEBI:57634"/>
    </ligand>
</feature>
<feature type="binding site" evidence="5">
    <location>
        <position position="136"/>
    </location>
    <ligand>
        <name>beta-D-fructose 6-phosphate</name>
        <dbReference type="ChEBI" id="CHEBI:57634"/>
    </ligand>
</feature>
<feature type="binding site" evidence="5">
    <location>
        <begin position="167"/>
        <end position="172"/>
    </location>
    <ligand>
        <name>ATP</name>
        <dbReference type="ChEBI" id="CHEBI:30616"/>
    </ligand>
</feature>
<feature type="binding site" evidence="5">
    <location>
        <position position="172"/>
    </location>
    <ligand>
        <name>beta-D-fructose 6-phosphate</name>
        <dbReference type="ChEBI" id="CHEBI:57634"/>
    </ligand>
</feature>
<feature type="binding site" evidence="5">
    <location>
        <position position="193"/>
    </location>
    <ligand>
        <name>beta-D-fructose 6-phosphate</name>
        <dbReference type="ChEBI" id="CHEBI:57634"/>
    </ligand>
</feature>
<feature type="binding site" evidence="5">
    <location>
        <position position="197"/>
    </location>
    <ligand>
        <name>beta-D-fructose 6-phosphate</name>
        <dbReference type="ChEBI" id="CHEBI:57634"/>
    </ligand>
</feature>
<feature type="binding site" evidence="5">
    <location>
        <position position="256"/>
    </location>
    <ligand>
        <name>beta-D-fructose 2,6-bisphosphate</name>
        <dbReference type="ChEBI" id="CHEBI:58579"/>
    </ligand>
</feature>
<feature type="binding site" evidence="5">
    <location>
        <position position="269"/>
    </location>
    <ligand>
        <name>beta-D-fructose 2,6-bisphosphate</name>
        <dbReference type="ChEBI" id="CHEBI:58579"/>
    </ligand>
</feature>
<feature type="binding site" evidence="5">
    <location>
        <position position="337"/>
    </location>
    <ligand>
        <name>beta-D-fructose 2,6-bisphosphate</name>
        <dbReference type="ChEBI" id="CHEBI:58579"/>
    </ligand>
</feature>
<feature type="binding site" evidence="3">
    <location>
        <begin position="348"/>
        <end position="351"/>
    </location>
    <ligand>
        <name>ATP</name>
        <dbReference type="ChEBI" id="CHEBI:30616"/>
    </ligand>
</feature>
<feature type="binding site" evidence="5">
    <location>
        <position position="351"/>
    </location>
    <ligand>
        <name>beta-D-fructose 2,6-bisphosphate</name>
        <dbReference type="ChEBI" id="CHEBI:58579"/>
    </ligand>
</feature>
<feature type="binding site" evidence="5">
    <location>
        <position position="355"/>
    </location>
    <ligand>
        <name>beta-D-fructose 2,6-bisphosphate</name>
        <dbReference type="ChEBI" id="CHEBI:58579"/>
    </ligand>
</feature>
<feature type="binding site" evidence="5">
    <location>
        <position position="366"/>
    </location>
    <ligand>
        <name>beta-D-fructose 2,6-bisphosphate</name>
        <dbReference type="ChEBI" id="CHEBI:58579"/>
    </ligand>
</feature>
<feature type="binding site" evidence="3">
    <location>
        <begin position="392"/>
        <end position="396"/>
    </location>
    <ligand>
        <name>ATP</name>
        <dbReference type="ChEBI" id="CHEBI:30616"/>
    </ligand>
</feature>
<feature type="binding site" evidence="5">
    <location>
        <position position="392"/>
    </location>
    <ligand>
        <name>beta-D-fructose 2,6-bisphosphate</name>
        <dbReference type="ChEBI" id="CHEBI:58579"/>
    </ligand>
</feature>
<feature type="binding site" evidence="3">
    <location>
        <position position="396"/>
    </location>
    <ligand>
        <name>beta-D-fructose 2,6-bisphosphate</name>
        <dbReference type="ChEBI" id="CHEBI:58579"/>
    </ligand>
</feature>
<feature type="binding site" evidence="5">
    <location>
        <position position="428"/>
    </location>
    <ligand>
        <name>ATP</name>
        <dbReference type="ChEBI" id="CHEBI:30616"/>
    </ligand>
</feature>
<feature type="site" description="Transition state stabilizer" evidence="5">
    <location>
        <position position="256"/>
    </location>
</feature>
<feature type="site" description="Transition state stabilizer" evidence="5">
    <location>
        <position position="391"/>
    </location>
</feature>
<feature type="modified residue" description="N-acetylserine" evidence="2">
    <location>
        <position position="2"/>
    </location>
</feature>
<feature type="modified residue" description="Phosphoserine; by PKA" evidence="1">
    <location>
        <position position="29"/>
    </location>
</feature>
<feature type="modified residue" description="Phosphoserine; by AMPK and PKA" evidence="2">
    <location>
        <position position="466"/>
    </location>
</feature>
<feature type="modified residue" description="Phosphothreonine" evidence="2">
    <location>
        <position position="468"/>
    </location>
</feature>
<feature type="modified residue" description="Phosphothreonine; by PKC" evidence="4">
    <location>
        <position position="475"/>
    </location>
</feature>
<feature type="modified residue" description="Phosphoserine" evidence="2">
    <location>
        <position position="483"/>
    </location>
</feature>
<feature type="modified residue" description="Phosphoserine" evidence="2">
    <location>
        <position position="493"/>
    </location>
</feature>
<sequence length="530" mass="61168">MSGASSSEQNNNSYETKPPNLRMSEKKCSWASYMTNSPTLIVMIGLPARGKTYVSKKLTRYLNWIGVPTKVFNLGVYRREAVKSYKSYDFFRHDNEEAMKIRKQCALVALEDVKAYLTEENGQIAVFDATNTTRERRDMILNFAEQNSFKVFFVESVCDDPDVIAANILEVKVSSPDYPERNRENVMEDFLKRIECYKVTYRPLDPDNYDKDLSFIKVINVGQRFLVNRVQDYIQSKIVYYLMNIHVQPRTIYLCRHGESEFSLLGKIGGDSGLSVRGKQFAQALRKFLEEQEITDLKVWTSQLKRTIQTAESLGVPYEQWKILNEIDAGVCEEMTYAEIEKRYPEEFALRDQEKYLYRYPGGESYQDLVQRLEPVIMELERQGNVLVISHQAVMRCLLAYFLDKGADELPYLRCPLHTIFKLTPVAYGCKVETIKLNVEAVNTHRDKPTNNFPKNQTPVRMRRNSFTPLSSSNTIRRPRNYSVGSRPLKPLSPLRAQDMQEGPTSRRPKSHSGWCTVCFPPALASCPCH</sequence>
<accession>Q5NVT1</accession>
<evidence type="ECO:0000250" key="1"/>
<evidence type="ECO:0000250" key="2">
    <source>
        <dbReference type="UniProtKB" id="O60825"/>
    </source>
</evidence>
<evidence type="ECO:0000250" key="3">
    <source>
        <dbReference type="UniProtKB" id="P07953"/>
    </source>
</evidence>
<evidence type="ECO:0000250" key="4">
    <source>
        <dbReference type="UniProtKB" id="P26285"/>
    </source>
</evidence>
<evidence type="ECO:0000250" key="5">
    <source>
        <dbReference type="UniProtKB" id="Q16875"/>
    </source>
</evidence>
<evidence type="ECO:0000255" key="6"/>
<evidence type="ECO:0000256" key="7">
    <source>
        <dbReference type="SAM" id="MobiDB-lite"/>
    </source>
</evidence>
<evidence type="ECO:0000305" key="8"/>
<reference key="1">
    <citation type="submission" date="2004-11" db="EMBL/GenBank/DDBJ databases">
        <authorList>
            <consortium name="The German cDNA consortium"/>
        </authorList>
    </citation>
    <scope>NUCLEOTIDE SEQUENCE [LARGE SCALE MRNA]</scope>
    <source>
        <tissue>Kidney</tissue>
    </source>
</reference>
<protein>
    <recommendedName>
        <fullName>6-phosphofructo-2-kinase/fructose-2,6-bisphosphatase 2</fullName>
        <shortName>6PF-2-K/Fru-2,6-P2ase 2</shortName>
        <shortName>PFK/FBPase 2</shortName>
    </recommendedName>
    <alternativeName>
        <fullName>6PF-2-K/Fru-2,6-P2ase heart-type isozyme</fullName>
    </alternativeName>
    <domain>
        <recommendedName>
            <fullName>6-phosphofructo-2-kinase</fullName>
            <ecNumber evidence="2">2.7.1.105</ecNumber>
        </recommendedName>
    </domain>
    <domain>
        <recommendedName>
            <fullName>Fructose-2,6-bisphosphatase</fullName>
            <ecNumber evidence="2">3.1.3.46</ecNumber>
        </recommendedName>
    </domain>
</protein>
<gene>
    <name type="primary">PFKFB2</name>
</gene>
<name>F262_PONAB</name>